<feature type="chain" id="PRO_0000222315" description="Capsid protein">
    <location>
        <begin position="1"/>
        <end position="183"/>
    </location>
</feature>
<feature type="repeat" description="1; half-length">
    <location>
        <begin position="155"/>
        <end position="161"/>
    </location>
</feature>
<feature type="repeat" description="2">
    <location>
        <begin position="162"/>
        <end position="169"/>
    </location>
</feature>
<feature type="repeat" description="3">
    <location>
        <begin position="170"/>
        <end position="177"/>
    </location>
</feature>
<feature type="region of interest" description="Disordered" evidence="2">
    <location>
        <begin position="136"/>
        <end position="183"/>
    </location>
</feature>
<feature type="region of interest" description="3 X 8 AA repeats of S-P-R-R-R-[PR]-S-Q">
    <location>
        <begin position="155"/>
        <end position="177"/>
    </location>
</feature>
<feature type="region of interest" description="RNA binding" evidence="1">
    <location>
        <begin position="177"/>
        <end position="183"/>
    </location>
</feature>
<feature type="short sequence motif" description="Bipartite nuclear localization signal" evidence="1">
    <location>
        <begin position="158"/>
        <end position="175"/>
    </location>
</feature>
<feature type="compositionally biased region" description="Basic residues" evidence="2">
    <location>
        <begin position="149"/>
        <end position="176"/>
    </location>
</feature>
<feature type="modified residue" description="Phosphoserine; by host" evidence="1 3">
    <location>
        <position position="155"/>
    </location>
</feature>
<feature type="modified residue" description="Phosphoserine; by host" evidence="1 3">
    <location>
        <position position="162"/>
    </location>
</feature>
<feature type="modified residue" description="Phosphoserine; by host" evidence="1 3">
    <location>
        <position position="170"/>
    </location>
</feature>
<feature type="sequence variant" description="In strain: Latvia.">
    <original>T</original>
    <variation>N</variation>
    <location>
        <position position="33"/>
    </location>
</feature>
<feature type="sequence variant" description="In strain: Latvia.">
    <original>A</original>
    <variation>I</variation>
    <location>
        <position position="80"/>
    </location>
</feature>
<feature type="sequence variant" description="Frequent mutation in chronic HBV carriers.">
    <original>F</original>
    <variation>L</variation>
    <location>
        <position position="97"/>
    </location>
</feature>
<feature type="mutagenesis site" description="Complete loss of replication." evidence="3">
    <original>S</original>
    <variation>A</variation>
    <location>
        <position position="155"/>
    </location>
</feature>
<feature type="mutagenesis site" description="Complete loss of pregenomic RNA encapsidation and replication." evidence="3">
    <original>S</original>
    <variation>A</variation>
    <location>
        <position position="162"/>
    </location>
</feature>
<feature type="mutagenesis site" description="Partial loss of replication." evidence="3">
    <original>S</original>
    <variation>A</variation>
    <location>
        <position position="170"/>
    </location>
</feature>
<feature type="helix" evidence="4">
    <location>
        <begin position="7"/>
        <end position="9"/>
    </location>
</feature>
<feature type="helix" evidence="4">
    <location>
        <begin position="13"/>
        <end position="16"/>
    </location>
</feature>
<feature type="strand" evidence="5">
    <location>
        <begin position="17"/>
        <end position="19"/>
    </location>
</feature>
<feature type="helix" evidence="4">
    <location>
        <begin position="21"/>
        <end position="23"/>
    </location>
</feature>
<feature type="helix" evidence="4">
    <location>
        <begin position="27"/>
        <end position="42"/>
    </location>
</feature>
<feature type="strand" evidence="4">
    <location>
        <begin position="44"/>
        <end position="46"/>
    </location>
</feature>
<feature type="helix" evidence="4">
    <location>
        <begin position="50"/>
        <end position="75"/>
    </location>
</feature>
<feature type="helix" evidence="4">
    <location>
        <begin position="79"/>
        <end position="90"/>
    </location>
</feature>
<feature type="helix" evidence="4">
    <location>
        <begin position="92"/>
        <end position="109"/>
    </location>
</feature>
<feature type="helix" evidence="4">
    <location>
        <begin position="112"/>
        <end position="127"/>
    </location>
</feature>
<feature type="helix" evidence="4">
    <location>
        <begin position="130"/>
        <end position="132"/>
    </location>
</feature>
<feature type="strand" evidence="6">
    <location>
        <begin position="145"/>
        <end position="148"/>
    </location>
</feature>
<comment type="function">
    <text evidence="1">Self assembles to form an icosahedral capsid. Most capsids appear to be large particles with an icosahedral symmetry of T=4 and consist of 240 copies of capsid protein, though a fraction forms smaller T=3 particles consisting of 180 capsid proteins. Entering capsids are transported along microtubules to the nucleus. Phosphorylation of the capsid is thought to induce exposure of nuclear localization signal in the C-terminal portion of the capsid protein that allows binding to the nuclear pore complex via the importin (karyopherin-) alpha and beta. Capsids are imported in intact form through the nuclear pore into the nuclear basket, where it probably binds NUP153. Only capsids that contain the mature viral genome can release the viral DNA and capsid protein into the nucleoplasm. Immature capsids get stuck in the basket. Capsids encapsulate the pre-genomic RNA and the P protein. Pre-genomic RNA is reverse-transcribed into DNA while the capsid is still in the cytoplasm. The capsid can then either be directed to the nucleus, providing more genomes for transcription, or bud through the endoplasmic reticulum to provide new virions.</text>
</comment>
<comment type="subunit">
    <text evidence="1">Homodimerizes, then multimerizes. Interacts with cytosol exposed regions of viral L glycoprotein present in the reticulum-to-Golgi compartment. Interacts with human FLNB. Phosphorylated form interacts with host importin alpha; this interaction depends on the exposure of the NLS, which itself depends upon genome maturation and/or phosphorylation of the capsid protein. Interacts with host NUP153.</text>
</comment>
<comment type="subcellular location">
    <subcellularLocation>
        <location evidence="1">Virion</location>
    </subcellularLocation>
    <subcellularLocation>
        <location evidence="1">Host cytoplasm</location>
    </subcellularLocation>
</comment>
<comment type="alternative products">
    <event type="alternative initiation"/>
    <isoform>
        <id>P03146-1</id>
        <name>Capsid protein</name>
        <sequence type="displayed"/>
    </isoform>
    <isoform>
        <id>P0C573-1</id>
        <name>External core antigen</name>
        <sequence type="external"/>
    </isoform>
</comment>
<comment type="PTM">
    <text evidence="1">Phosphorylated by host SRPK1, SRPK2, and maybe protein kinase C or GAPDH. Phosphorylation is critical for pregenomic RNA packaging. Protein kinase C phosphorylation is stimulated by HBx protein and may play a role in transport of the viral genome to the nucleus at the late step during the viral replication cycle.</text>
</comment>
<comment type="similarity">
    <text evidence="1">Belongs to the orthohepadnavirus core antigen family.</text>
</comment>
<comment type="sequence caution">
    <conflict type="erroneous initiation">
        <sequence resource="EMBL-CDS" id="CAA24706"/>
    </conflict>
</comment>
<accession>P03146</accession>
<dbReference type="EMBL" id="V01460">
    <property type="protein sequence ID" value="CAA24706.1"/>
    <property type="status" value="ALT_INIT"/>
    <property type="molecule type" value="Genomic_DNA"/>
</dbReference>
<dbReference type="EMBL" id="X02496">
    <property type="status" value="NOT_ANNOTATED_CDS"/>
    <property type="molecule type" value="Genomic_DNA"/>
</dbReference>
<dbReference type="RefSeq" id="YP_009173857.1">
    <property type="nucleotide sequence ID" value="NC_003977.2"/>
</dbReference>
<dbReference type="PDB" id="6HTX">
    <property type="method" value="EM"/>
    <property type="resolution" value="2.66 A"/>
    <property type="chains" value="A/B/C/D=1-183"/>
</dbReference>
<dbReference type="PDB" id="6HU4">
    <property type="method" value="EM"/>
    <property type="resolution" value="2.64 A"/>
    <property type="chains" value="A/B/C/D/E/F/G/H=1-183"/>
</dbReference>
<dbReference type="PDB" id="6HU7">
    <property type="method" value="EM"/>
    <property type="resolution" value="2.80 A"/>
    <property type="chains" value="A/B/C/D/F/G/H=1-183"/>
</dbReference>
<dbReference type="PDB" id="7OCO">
    <property type="method" value="EM"/>
    <property type="resolution" value="3.20 A"/>
    <property type="chains" value="A/B/C/D=1-183"/>
</dbReference>
<dbReference type="PDB" id="7OCW">
    <property type="method" value="EM"/>
    <property type="resolution" value="3.20 A"/>
    <property type="chains" value="A/B/C/D=1-183"/>
</dbReference>
<dbReference type="PDB" id="7OD4">
    <property type="method" value="EM"/>
    <property type="resolution" value="2.80 A"/>
    <property type="chains" value="A/B/C/D=1-183"/>
</dbReference>
<dbReference type="PDB" id="7OD6">
    <property type="method" value="EM"/>
    <property type="resolution" value="3.00 A"/>
    <property type="chains" value="A/B/C/D=1-183"/>
</dbReference>
<dbReference type="PDB" id="7OD7">
    <property type="method" value="EM"/>
    <property type="resolution" value="2.80 A"/>
    <property type="chains" value="A/B/C/D=1-183"/>
</dbReference>
<dbReference type="PDB" id="7OD8">
    <property type="method" value="EM"/>
    <property type="resolution" value="3.00 A"/>
    <property type="chains" value="A/B/C/D=1-183"/>
</dbReference>
<dbReference type="PDB" id="7OEN">
    <property type="method" value="EM"/>
    <property type="resolution" value="3.20 A"/>
    <property type="chains" value="A/B/C/D=1-183"/>
</dbReference>
<dbReference type="PDB" id="7OEV">
    <property type="method" value="EM"/>
    <property type="resolution" value="3.10 A"/>
    <property type="chains" value="A/B/C/D=1-183"/>
</dbReference>
<dbReference type="PDB" id="7OEW">
    <property type="method" value="EM"/>
    <property type="resolution" value="2.90 A"/>
    <property type="chains" value="A/B/C/D=1-183"/>
</dbReference>
<dbReference type="PDB" id="7PZ9">
    <property type="method" value="EM"/>
    <property type="resolution" value="2.80 A"/>
    <property type="chains" value="A/B/C/D=1-183"/>
</dbReference>
<dbReference type="PDB" id="7PZI">
    <property type="method" value="EM"/>
    <property type="resolution" value="2.90 A"/>
    <property type="chains" value="A/B/C/D=1-183"/>
</dbReference>
<dbReference type="PDB" id="7PZK">
    <property type="method" value="EM"/>
    <property type="resolution" value="3.10 A"/>
    <property type="chains" value="A/B/C/D=1-183"/>
</dbReference>
<dbReference type="PDB" id="7PZL">
    <property type="method" value="EM"/>
    <property type="resolution" value="2.80 A"/>
    <property type="chains" value="A/B/C/D=1-183"/>
</dbReference>
<dbReference type="PDB" id="7PZM">
    <property type="method" value="EM"/>
    <property type="resolution" value="2.90 A"/>
    <property type="chains" value="A/B/C/D=1-183"/>
</dbReference>
<dbReference type="PDB" id="7PZN">
    <property type="method" value="EM"/>
    <property type="resolution" value="3.20 A"/>
    <property type="chains" value="A/B/C/D=1-183"/>
</dbReference>
<dbReference type="PDB" id="8G5V">
    <property type="method" value="EM"/>
    <property type="resolution" value="3.00 A"/>
    <property type="chains" value="A/B/C/D/E/F/G/H/I/J/K/L=1-183"/>
</dbReference>
<dbReference type="PDB" id="8G6V">
    <property type="method" value="EM"/>
    <property type="resolution" value="3.40 A"/>
    <property type="chains" value="A/B/C/D/E/F/G/H/I/J/K/L=1-183"/>
</dbReference>
<dbReference type="PDB" id="8PWO">
    <property type="method" value="EM"/>
    <property type="resolution" value="2.80 A"/>
    <property type="chains" value="A/B/C/D=1-183"/>
</dbReference>
<dbReference type="PDB" id="8UYT">
    <property type="method" value="EM"/>
    <property type="resolution" value="2.70 A"/>
    <property type="chains" value="A/B/C/D=1-153"/>
</dbReference>
<dbReference type="PDB" id="8UYU">
    <property type="method" value="EM"/>
    <property type="resolution" value="3.30 A"/>
    <property type="chains" value="A/B/C=1-183"/>
</dbReference>
<dbReference type="PDB" id="8UYV">
    <property type="method" value="EM"/>
    <property type="resolution" value="2.90 A"/>
    <property type="chains" value="A/B/C/D=1-183"/>
</dbReference>
<dbReference type="PDB" id="8UYW">
    <property type="method" value="EM"/>
    <property type="resolution" value="3.10 A"/>
    <property type="chains" value="A/B/C=1-183"/>
</dbReference>
<dbReference type="PDBsum" id="6HTX"/>
<dbReference type="PDBsum" id="6HU4"/>
<dbReference type="PDBsum" id="6HU7"/>
<dbReference type="PDBsum" id="7OCO"/>
<dbReference type="PDBsum" id="7OCW"/>
<dbReference type="PDBsum" id="7OD4"/>
<dbReference type="PDBsum" id="7OD6"/>
<dbReference type="PDBsum" id="7OD7"/>
<dbReference type="PDBsum" id="7OD8"/>
<dbReference type="PDBsum" id="7OEN"/>
<dbReference type="PDBsum" id="7OEV"/>
<dbReference type="PDBsum" id="7OEW"/>
<dbReference type="PDBsum" id="7PZ9"/>
<dbReference type="PDBsum" id="7PZI"/>
<dbReference type="PDBsum" id="7PZK"/>
<dbReference type="PDBsum" id="7PZL"/>
<dbReference type="PDBsum" id="7PZM"/>
<dbReference type="PDBsum" id="7PZN"/>
<dbReference type="PDBsum" id="8G5V"/>
<dbReference type="PDBsum" id="8G6V"/>
<dbReference type="PDBsum" id="8PWO"/>
<dbReference type="PDBsum" id="8UYT"/>
<dbReference type="PDBsum" id="8UYU"/>
<dbReference type="PDBsum" id="8UYV"/>
<dbReference type="PDBsum" id="8UYW"/>
<dbReference type="BMRB" id="P03146"/>
<dbReference type="EMDB" id="EMD-0271"/>
<dbReference type="EMDB" id="EMD-0272"/>
<dbReference type="EMDB" id="EMD-12810"/>
<dbReference type="EMDB" id="EMD-12820"/>
<dbReference type="EMDB" id="EMD-12821"/>
<dbReference type="EMDB" id="EMD-12822"/>
<dbReference type="EMDB" id="EMD-13726"/>
<dbReference type="EMDB" id="EMD-13728"/>
<dbReference type="EMDB" id="EMD-13731"/>
<dbReference type="EMDB" id="EMD-13732"/>
<dbReference type="EMDB" id="EMD-13733"/>
<dbReference type="EMDB" id="EMD-13734"/>
<dbReference type="EMDB" id="EMD-17996"/>
<dbReference type="SMR" id="P03146"/>
<dbReference type="iPTMnet" id="P03146"/>
<dbReference type="GeneID" id="944568"/>
<dbReference type="KEGG" id="vg:944568"/>
<dbReference type="Proteomes" id="UP000007930">
    <property type="component" value="Segment"/>
</dbReference>
<dbReference type="GO" id="GO:0043657">
    <property type="term" value="C:host cell"/>
    <property type="evidence" value="ECO:0007669"/>
    <property type="project" value="GOC"/>
</dbReference>
<dbReference type="GO" id="GO:0030430">
    <property type="term" value="C:host cell cytoplasm"/>
    <property type="evidence" value="ECO:0007669"/>
    <property type="project" value="UniProtKB-SubCell"/>
</dbReference>
<dbReference type="GO" id="GO:0039619">
    <property type="term" value="C:T=4 icosahedral viral capsid"/>
    <property type="evidence" value="ECO:0007669"/>
    <property type="project" value="UniProtKB-UniRule"/>
</dbReference>
<dbReference type="GO" id="GO:0003677">
    <property type="term" value="F:DNA binding"/>
    <property type="evidence" value="ECO:0007669"/>
    <property type="project" value="UniProtKB-UniRule"/>
</dbReference>
<dbReference type="GO" id="GO:0003723">
    <property type="term" value="F:RNA binding"/>
    <property type="evidence" value="ECO:0007669"/>
    <property type="project" value="UniProtKB-UniRule"/>
</dbReference>
<dbReference type="GO" id="GO:0005198">
    <property type="term" value="F:structural molecule activity"/>
    <property type="evidence" value="ECO:0007669"/>
    <property type="project" value="UniProtKB-UniRule"/>
</dbReference>
<dbReference type="GO" id="GO:0075521">
    <property type="term" value="P:microtubule-dependent intracellular transport of viral material towards nucleus"/>
    <property type="evidence" value="ECO:0007669"/>
    <property type="project" value="UniProtKB-UniRule"/>
</dbReference>
<dbReference type="GO" id="GO:0046718">
    <property type="term" value="P:symbiont entry into host cell"/>
    <property type="evidence" value="ECO:0007669"/>
    <property type="project" value="UniProtKB-UniRule"/>
</dbReference>
<dbReference type="GO" id="GO:0075732">
    <property type="term" value="P:viral penetration into host nucleus"/>
    <property type="evidence" value="ECO:0007669"/>
    <property type="project" value="UniProtKB-UniRule"/>
</dbReference>
<dbReference type="FunFam" id="1.10.4090.10:FF:000001">
    <property type="entry name" value="Capsid protein"/>
    <property type="match status" value="1"/>
</dbReference>
<dbReference type="Gene3D" id="1.10.4090.10">
    <property type="entry name" value="Viral capsid, core domain supefamily, Hepatitis B virus"/>
    <property type="match status" value="1"/>
</dbReference>
<dbReference type="HAMAP" id="MF_04076">
    <property type="entry name" value="HBV_HBEAG"/>
    <property type="match status" value="1"/>
</dbReference>
<dbReference type="InterPro" id="IPR002006">
    <property type="entry name" value="Hepatitis_core"/>
</dbReference>
<dbReference type="InterPro" id="IPR036459">
    <property type="entry name" value="Viral_capsid_core_dom_sf_HBV"/>
</dbReference>
<dbReference type="Pfam" id="PF00906">
    <property type="entry name" value="Hepatitis_core"/>
    <property type="match status" value="3"/>
</dbReference>
<dbReference type="SUPFAM" id="SSF47852">
    <property type="entry name" value="Hepatitis B viral capsid (hbcag)"/>
    <property type="match status" value="1"/>
</dbReference>
<keyword id="KW-0002">3D-structure</keyword>
<keyword id="KW-0024">Alternative initiation</keyword>
<keyword id="KW-0167">Capsid protein</keyword>
<keyword id="KW-1176">Cytoplasmic inwards viral transport</keyword>
<keyword id="KW-0238">DNA-binding</keyword>
<keyword id="KW-1035">Host cytoplasm</keyword>
<keyword id="KW-0945">Host-virus interaction</keyword>
<keyword id="KW-1177">Microtubular inwards viral transport</keyword>
<keyword id="KW-0597">Phosphoprotein</keyword>
<keyword id="KW-1185">Reference proteome</keyword>
<keyword id="KW-0677">Repeat</keyword>
<keyword id="KW-0694">RNA-binding</keyword>
<keyword id="KW-1144">T=4 icosahedral capsid protein</keyword>
<keyword id="KW-1163">Viral penetration into host nucleus</keyword>
<keyword id="KW-0946">Virion</keyword>
<keyword id="KW-1160">Virus entry into host cell</keyword>
<evidence type="ECO:0000255" key="1">
    <source>
        <dbReference type="HAMAP-Rule" id="MF_04076"/>
    </source>
</evidence>
<evidence type="ECO:0000256" key="2">
    <source>
        <dbReference type="SAM" id="MobiDB-lite"/>
    </source>
</evidence>
<evidence type="ECO:0000269" key="3">
    <source>
    </source>
</evidence>
<evidence type="ECO:0007829" key="4">
    <source>
        <dbReference type="PDB" id="6HU4"/>
    </source>
</evidence>
<evidence type="ECO:0007829" key="5">
    <source>
        <dbReference type="PDB" id="7OD7"/>
    </source>
</evidence>
<evidence type="ECO:0007829" key="6">
    <source>
        <dbReference type="PDB" id="8UYT"/>
    </source>
</evidence>
<name>CAPSD_HBVD3</name>
<protein>
    <recommendedName>
        <fullName evidence="1">Capsid protein</fullName>
    </recommendedName>
    <alternativeName>
        <fullName evidence="1">Core antigen</fullName>
    </alternativeName>
    <alternativeName>
        <fullName evidence="1">Core protein</fullName>
    </alternativeName>
    <alternativeName>
        <fullName evidence="1">HBcAg</fullName>
    </alternativeName>
    <alternativeName>
        <fullName evidence="1">p21.5</fullName>
    </alternativeName>
</protein>
<proteinExistence type="evidence at protein level"/>
<organism>
    <name type="scientific">Hepatitis B virus genotype D subtype ayw (isolate France/Tiollais/1979)</name>
    <name type="common">HBV-D</name>
    <dbReference type="NCBI Taxonomy" id="490133"/>
    <lineage>
        <taxon>Viruses</taxon>
        <taxon>Riboviria</taxon>
        <taxon>Pararnavirae</taxon>
        <taxon>Artverviricota</taxon>
        <taxon>Revtraviricetes</taxon>
        <taxon>Blubervirales</taxon>
        <taxon>Hepadnaviridae</taxon>
        <taxon>Orthohepadnavirus</taxon>
        <taxon>Hepatitis B virus</taxon>
        <taxon>hepatitis B virus genotype D</taxon>
    </lineage>
</organism>
<gene>
    <name evidence="1" type="primary">C</name>
</gene>
<sequence length="183" mass="21116">MDIDPYKEFGATVELLSFLPSDFFPSVRDLLDTASALYREALESPEHCSPHHTALRQAILCWGELMTLATWVGVNLEDPASRDLVVSYVNTNMGLKFRQLLWFHISCLTFGRETVIEYLVSFGVWIRTPPAYRPPNAPILSTLPETTVVRRRGRSPRRRTPSPRRRRSQSPRRRRSQSRESQC</sequence>
<reference key="1">
    <citation type="journal article" date="1979" name="Nature">
        <title>Nucleotide sequence of the hepatitis B virus genome (subtype ayw) cloned in E. coli.</title>
        <authorList>
            <person name="Galibert F."/>
            <person name="Mandart E."/>
            <person name="Fitoussi F."/>
            <person name="Tiollais P."/>
            <person name="Charnay P."/>
        </authorList>
    </citation>
    <scope>NUCLEOTIDE SEQUENCE [GENOMIC DNA]</scope>
</reference>
<reference key="2">
    <citation type="journal article" date="1985" name="FEBS Lett.">
        <title>Subtype ayw variant of hepatitis B virus. DNA primary structure analysis.</title>
        <authorList>
            <person name="Bichko V."/>
            <person name="Pushko P."/>
            <person name="Dreilina D."/>
            <person name="Pumpen P."/>
            <person name="Gren E.Y."/>
        </authorList>
    </citation>
    <scope>NUCLEOTIDE SEQUENCE [GENOMIC DNA]</scope>
    <source>
        <strain>Latvia</strain>
    </source>
</reference>
<reference key="3">
    <citation type="journal article" date="1995" name="Structure">
        <title>Evolutionary conservation in the hepatitis B virus core structure: comparison of human and duck cores.</title>
        <authorList>
            <person name="Kenney J.M."/>
            <person name="von Bonsdorff C.H."/>
            <person name="Nassal M."/>
            <person name="Fuller S.D."/>
        </authorList>
    </citation>
    <scope>CAPSID STRUCTURE</scope>
</reference>
<reference key="4">
    <citation type="journal article" date="1998" name="J. Virol.">
        <title>Phosphorylation of the core protein of hepatitis B virus by a 46-kilodalton serine kinase.</title>
        <authorList>
            <person name="Kau J.H."/>
            <person name="Ting L.P."/>
        </authorList>
    </citation>
    <scope>PHOSPHORYLATION</scope>
</reference>
<reference key="5">
    <citation type="journal article" date="1999" name="J. Virol.">
        <title>Subtype-independent immature secretion and subtype-dependent replication deficiency of a highly frequent, naturally occurring mutation of human hepatitis B virus core antigen.</title>
        <authorList>
            <person name="Yuan T.T."/>
            <person name="Tai P.C."/>
            <person name="Shih C."/>
        </authorList>
    </citation>
    <scope>NATURALLY OCCURRING MUTATION</scope>
</reference>
<reference key="6">
    <citation type="journal article" date="2002" name="J. Virol.">
        <title>Identification of SRPK1 and SRPK2 as the major cellular protein kinases phosphorylating hepatitis B virus core protein.</title>
        <authorList>
            <person name="Daub H."/>
            <person name="Blencke S."/>
            <person name="Habenberger P."/>
            <person name="Kurtenbach A."/>
            <person name="Dennenmoser J."/>
            <person name="Wissing J."/>
            <person name="Ullrich A."/>
            <person name="Cotten M."/>
        </authorList>
    </citation>
    <scope>PHOSPHORYLATION</scope>
</reference>
<reference key="7">
    <citation type="journal article" date="2005" name="J. Virol.">
        <title>Hepatitis B virus DNA replication is coordinated by core protein serine phosphorylation and HBx expression.</title>
        <authorList>
            <person name="Melegari M."/>
            <person name="Wolf S.K."/>
            <person name="Schneider R.J."/>
        </authorList>
    </citation>
    <scope>PHOSPHORYLATION AT SER-155; SER-162 AND SER-170</scope>
    <scope>MUTAGENESIS OF SER-155; SER-162 AND SER-170</scope>
</reference>
<reference key="8">
    <citation type="journal article" date="2004" name="Virus Res.">
        <title>Envelopment of the hepatitis B virus nucleocapsid.</title>
        <authorList>
            <person name="Bruss V."/>
        </authorList>
    </citation>
    <scope>REVIEW</scope>
</reference>
<organismHost>
    <name type="scientific">Homo sapiens</name>
    <name type="common">Human</name>
    <dbReference type="NCBI Taxonomy" id="9606"/>
</organismHost>
<organismHost>
    <name type="scientific">Pan troglodytes</name>
    <name type="common">Chimpanzee</name>
    <dbReference type="NCBI Taxonomy" id="9598"/>
</organismHost>